<keyword id="KW-0238">DNA-binding</keyword>
<keyword id="KW-0371">Homeobox</keyword>
<keyword id="KW-0539">Nucleus</keyword>
<keyword id="KW-1185">Reference proteome</keyword>
<keyword id="KW-0804">Transcription</keyword>
<keyword id="KW-0805">Transcription regulation</keyword>
<organism>
    <name type="scientific">Arabidopsis thaliana</name>
    <name type="common">Mouse-ear cress</name>
    <dbReference type="NCBI Taxonomy" id="3702"/>
    <lineage>
        <taxon>Eukaryota</taxon>
        <taxon>Viridiplantae</taxon>
        <taxon>Streptophyta</taxon>
        <taxon>Embryophyta</taxon>
        <taxon>Tracheophyta</taxon>
        <taxon>Spermatophyta</taxon>
        <taxon>Magnoliopsida</taxon>
        <taxon>eudicotyledons</taxon>
        <taxon>Gunneridae</taxon>
        <taxon>Pentapetalae</taxon>
        <taxon>rosids</taxon>
        <taxon>malvids</taxon>
        <taxon>Brassicales</taxon>
        <taxon>Brassicaceae</taxon>
        <taxon>Camelineae</taxon>
        <taxon>Arabidopsis</taxon>
    </lineage>
</organism>
<comment type="function">
    <text evidence="1">Probable transcription factor.</text>
</comment>
<comment type="subcellular location">
    <subcellularLocation>
        <location evidence="4">Nucleus</location>
    </subcellularLocation>
</comment>
<comment type="similarity">
    <text evidence="4">Belongs to the HD-ZIP homeobox family. Class II subfamily.</text>
</comment>
<comment type="sequence caution" evidence="4">
    <conflict type="erroneous gene model prediction">
        <sequence resource="EMBL-CDS" id="AAC67320"/>
    </conflict>
</comment>
<proteinExistence type="evidence at transcript level"/>
<name>ATB17_ARATH</name>
<dbReference type="EMBL" id="AJ431181">
    <property type="protein sequence ID" value="CAD24011.1"/>
    <property type="molecule type" value="mRNA"/>
</dbReference>
<dbReference type="EMBL" id="AC005560">
    <property type="protein sequence ID" value="AAC67320.1"/>
    <property type="status" value="ALT_SEQ"/>
    <property type="molecule type" value="Genomic_DNA"/>
</dbReference>
<dbReference type="EMBL" id="CP002685">
    <property type="protein sequence ID" value="AEC05450.1"/>
    <property type="molecule type" value="Genomic_DNA"/>
</dbReference>
<dbReference type="PIR" id="F84424">
    <property type="entry name" value="F84424"/>
</dbReference>
<dbReference type="SMR" id="Q8S9N6"/>
<dbReference type="BioGRID" id="74">
    <property type="interactions" value="4"/>
</dbReference>
<dbReference type="FunCoup" id="Q8S9N6">
    <property type="interactions" value="69"/>
</dbReference>
<dbReference type="STRING" id="3702.Q8S9N6"/>
<dbReference type="GlyGen" id="Q8S9N6">
    <property type="glycosylation" value="1 site"/>
</dbReference>
<dbReference type="PaxDb" id="3702-AT2G01430.1"/>
<dbReference type="ProteomicsDB" id="246531"/>
<dbReference type="EnsemblPlants" id="AT2G01430.1">
    <property type="protein sequence ID" value="AT2G01430.1"/>
    <property type="gene ID" value="AT2G01430"/>
</dbReference>
<dbReference type="GeneID" id="814671"/>
<dbReference type="Gramene" id="AT2G01430.1">
    <property type="protein sequence ID" value="AT2G01430.1"/>
    <property type="gene ID" value="AT2G01430"/>
</dbReference>
<dbReference type="KEGG" id="ath:AT2G01430"/>
<dbReference type="Araport" id="AT2G01430"/>
<dbReference type="TAIR" id="AT2G01430">
    <property type="gene designation" value="HB17"/>
</dbReference>
<dbReference type="eggNOG" id="KOG0483">
    <property type="taxonomic scope" value="Eukaryota"/>
</dbReference>
<dbReference type="HOGENOM" id="CLU_049516_6_0_1"/>
<dbReference type="InParanoid" id="Q8S9N6"/>
<dbReference type="OMA" id="EGFGCNN"/>
<dbReference type="PhylomeDB" id="Q8S9N6"/>
<dbReference type="PRO" id="PR:Q8S9N6"/>
<dbReference type="Proteomes" id="UP000006548">
    <property type="component" value="Chromosome 2"/>
</dbReference>
<dbReference type="ExpressionAtlas" id="Q8S9N6">
    <property type="expression patterns" value="baseline and differential"/>
</dbReference>
<dbReference type="GO" id="GO:0005634">
    <property type="term" value="C:nucleus"/>
    <property type="evidence" value="ECO:0000314"/>
    <property type="project" value="TAIR"/>
</dbReference>
<dbReference type="GO" id="GO:0003700">
    <property type="term" value="F:DNA-binding transcription factor activity"/>
    <property type="evidence" value="ECO:0000250"/>
    <property type="project" value="TAIR"/>
</dbReference>
<dbReference type="GO" id="GO:0000981">
    <property type="term" value="F:DNA-binding transcription factor activity, RNA polymerase II-specific"/>
    <property type="evidence" value="ECO:0007669"/>
    <property type="project" value="InterPro"/>
</dbReference>
<dbReference type="GO" id="GO:0043565">
    <property type="term" value="F:sequence-specific DNA binding"/>
    <property type="evidence" value="ECO:0000353"/>
    <property type="project" value="TAIR"/>
</dbReference>
<dbReference type="GO" id="GO:0009651">
    <property type="term" value="P:response to salt stress"/>
    <property type="evidence" value="ECO:0000315"/>
    <property type="project" value="TAIR"/>
</dbReference>
<dbReference type="CDD" id="cd00086">
    <property type="entry name" value="homeodomain"/>
    <property type="match status" value="1"/>
</dbReference>
<dbReference type="FunFam" id="1.10.10.60:FF:000577">
    <property type="entry name" value="Homeobox-leucine zipper protein 18"/>
    <property type="match status" value="1"/>
</dbReference>
<dbReference type="Gene3D" id="1.10.10.60">
    <property type="entry name" value="Homeodomain-like"/>
    <property type="match status" value="1"/>
</dbReference>
<dbReference type="InterPro" id="IPR001356">
    <property type="entry name" value="HD"/>
</dbReference>
<dbReference type="InterPro" id="IPR050762">
    <property type="entry name" value="HD-ZIP_Homeobox_LZ_Class_II"/>
</dbReference>
<dbReference type="InterPro" id="IPR017970">
    <property type="entry name" value="Homeobox_CS"/>
</dbReference>
<dbReference type="InterPro" id="IPR009057">
    <property type="entry name" value="Homeodomain-like_sf"/>
</dbReference>
<dbReference type="InterPro" id="IPR003106">
    <property type="entry name" value="Leu_zip_homeo"/>
</dbReference>
<dbReference type="PANTHER" id="PTHR45714:SF8">
    <property type="entry name" value="HOMEOBOX-LEUCINE ZIPPER PROTEIN ATHB-17"/>
    <property type="match status" value="1"/>
</dbReference>
<dbReference type="PANTHER" id="PTHR45714">
    <property type="entry name" value="HOMEOBOX-LEUCINE ZIPPER PROTEIN HAT14"/>
    <property type="match status" value="1"/>
</dbReference>
<dbReference type="Pfam" id="PF02183">
    <property type="entry name" value="HALZ"/>
    <property type="match status" value="1"/>
</dbReference>
<dbReference type="Pfam" id="PF00046">
    <property type="entry name" value="Homeodomain"/>
    <property type="match status" value="1"/>
</dbReference>
<dbReference type="SMART" id="SM00340">
    <property type="entry name" value="HALZ"/>
    <property type="match status" value="1"/>
</dbReference>
<dbReference type="SMART" id="SM00389">
    <property type="entry name" value="HOX"/>
    <property type="match status" value="1"/>
</dbReference>
<dbReference type="SUPFAM" id="SSF46689">
    <property type="entry name" value="Homeodomain-like"/>
    <property type="match status" value="1"/>
</dbReference>
<dbReference type="PROSITE" id="PS00027">
    <property type="entry name" value="HOMEOBOX_1"/>
    <property type="match status" value="1"/>
</dbReference>
<dbReference type="PROSITE" id="PS50071">
    <property type="entry name" value="HOMEOBOX_2"/>
    <property type="match status" value="1"/>
</dbReference>
<evidence type="ECO:0000250" key="1"/>
<evidence type="ECO:0000255" key="2">
    <source>
        <dbReference type="PROSITE-ProRule" id="PRU00108"/>
    </source>
</evidence>
<evidence type="ECO:0000256" key="3">
    <source>
        <dbReference type="SAM" id="MobiDB-lite"/>
    </source>
</evidence>
<evidence type="ECO:0000305" key="4"/>
<gene>
    <name type="primary">ATHB-17</name>
    <name type="ordered locus">At2g01430</name>
    <name type="ORF">F2I9.5</name>
</gene>
<protein>
    <recommendedName>
        <fullName>Homeobox-leucine zipper protein ATHB-17</fullName>
    </recommendedName>
    <alternativeName>
        <fullName>HD-ZIP protein ATHB-17</fullName>
    </alternativeName>
    <alternativeName>
        <fullName>Homeodomain transcription factor ATHB-17</fullName>
    </alternativeName>
</protein>
<feature type="chain" id="PRO_0000257796" description="Homeobox-leucine zipper protein ATHB-17">
    <location>
        <begin position="1"/>
        <end position="275"/>
    </location>
</feature>
<feature type="DNA-binding region" description="Homeobox" evidence="2">
    <location>
        <begin position="136"/>
        <end position="195"/>
    </location>
</feature>
<feature type="region of interest" description="Disordered" evidence="3">
    <location>
        <begin position="95"/>
        <end position="143"/>
    </location>
</feature>
<feature type="region of interest" description="Leucine-zipper">
    <location>
        <begin position="203"/>
        <end position="224"/>
    </location>
</feature>
<feature type="region of interest" description="Disordered" evidence="3">
    <location>
        <begin position="252"/>
        <end position="275"/>
    </location>
</feature>
<reference key="1">
    <citation type="submission" date="2002-02" db="EMBL/GenBank/DDBJ databases">
        <title>Nucleotide sequence of the Arabidopsis ATHB-17 mRNA, encoding an HD-Zip II protein related to ATHB-2.</title>
        <authorList>
            <person name="Ruzza V."/>
            <person name="Carabelli M."/>
            <person name="Ciarbelli A.R."/>
            <person name="Sessa G."/>
            <person name="Steindler C."/>
            <person name="Ruberti I."/>
        </authorList>
    </citation>
    <scope>NUCLEOTIDE SEQUENCE [MRNA]</scope>
    <source>
        <strain>cv. Columbia</strain>
    </source>
</reference>
<reference key="2">
    <citation type="journal article" date="1999" name="Nature">
        <title>Sequence and analysis of chromosome 2 of the plant Arabidopsis thaliana.</title>
        <authorList>
            <person name="Lin X."/>
            <person name="Kaul S."/>
            <person name="Rounsley S.D."/>
            <person name="Shea T.P."/>
            <person name="Benito M.-I."/>
            <person name="Town C.D."/>
            <person name="Fujii C.Y."/>
            <person name="Mason T.M."/>
            <person name="Bowman C.L."/>
            <person name="Barnstead M.E."/>
            <person name="Feldblyum T.V."/>
            <person name="Buell C.R."/>
            <person name="Ketchum K.A."/>
            <person name="Lee J.J."/>
            <person name="Ronning C.M."/>
            <person name="Koo H.L."/>
            <person name="Moffat K.S."/>
            <person name="Cronin L.A."/>
            <person name="Shen M."/>
            <person name="Pai G."/>
            <person name="Van Aken S."/>
            <person name="Umayam L."/>
            <person name="Tallon L.J."/>
            <person name="Gill J.E."/>
            <person name="Adams M.D."/>
            <person name="Carrera A.J."/>
            <person name="Creasy T.H."/>
            <person name="Goodman H.M."/>
            <person name="Somerville C.R."/>
            <person name="Copenhaver G.P."/>
            <person name="Preuss D."/>
            <person name="Nierman W.C."/>
            <person name="White O."/>
            <person name="Eisen J.A."/>
            <person name="Salzberg S.L."/>
            <person name="Fraser C.M."/>
            <person name="Venter J.C."/>
        </authorList>
    </citation>
    <scope>NUCLEOTIDE SEQUENCE [LARGE SCALE GENOMIC DNA]</scope>
    <source>
        <strain>cv. Columbia</strain>
    </source>
</reference>
<reference key="3">
    <citation type="journal article" date="2017" name="Plant J.">
        <title>Araport11: a complete reannotation of the Arabidopsis thaliana reference genome.</title>
        <authorList>
            <person name="Cheng C.Y."/>
            <person name="Krishnakumar V."/>
            <person name="Chan A.P."/>
            <person name="Thibaud-Nissen F."/>
            <person name="Schobel S."/>
            <person name="Town C.D."/>
        </authorList>
    </citation>
    <scope>GENOME REANNOTATION</scope>
    <source>
        <strain>cv. Columbia</strain>
    </source>
</reference>
<reference key="4">
    <citation type="journal article" date="2005" name="Plant Physiol.">
        <title>Homeodomain leucine zipper class I genes in Arabidopsis. Expression patterns and phylogenetic relationships.</title>
        <authorList>
            <person name="Henriksson E."/>
            <person name="Olsson A.S.B."/>
            <person name="Johannesson H."/>
            <person name="Johansson H."/>
            <person name="Hanson J."/>
            <person name="Engstroem P."/>
            <person name="Soederman E."/>
        </authorList>
    </citation>
    <scope>GENE FAMILY</scope>
</reference>
<sequence length="275" mass="31690">MIKLLFTYICTYTYKLYALYHMDYACVCMYKYKGIVTLQVCLFYIKLRVFLSNFTFSSSILALKNPNNSLIKIMAILPENSSNLDLTISVPGFSSSPLSDEGSGGGRDQLRLDMNRLPSSEDGDDEEFSHDDGSAPPRKKLRLTREQSRLLEDSFRQNHTLNPKQKEVLAKHLMLRPRQIEVWFQNRRARSKLKQTEMECEYLKRWFGSLTEENHRLHREVEELRAMKVGPTTVNSASSLTMCPRCERVTPAASPSRAVVPVPAKKTFPPQERDR</sequence>
<accession>Q8S9N6</accession>
<accession>Q9ZVG1</accession>